<proteinExistence type="inferred from homology"/>
<comment type="similarity">
    <text evidence="1">Belongs to the universal ribosomal protein uL29 family.</text>
</comment>
<sequence>MKANDIRDLSTTEIQDQEKALKEELFNLRFQLATGQLENTARIREVRKAIARMKTIVRERELA</sequence>
<keyword id="KW-0687">Ribonucleoprotein</keyword>
<keyword id="KW-0689">Ribosomal protein</keyword>
<evidence type="ECO:0000255" key="1">
    <source>
        <dbReference type="HAMAP-Rule" id="MF_00374"/>
    </source>
</evidence>
<evidence type="ECO:0000305" key="2"/>
<dbReference type="EMBL" id="AM263198">
    <property type="protein sequence ID" value="CAK21992.1"/>
    <property type="molecule type" value="Genomic_DNA"/>
</dbReference>
<dbReference type="RefSeq" id="WP_003720942.1">
    <property type="nucleotide sequence ID" value="NC_008555.1"/>
</dbReference>
<dbReference type="SMR" id="A0ALW0"/>
<dbReference type="STRING" id="386043.lwe2574"/>
<dbReference type="GeneID" id="93240505"/>
<dbReference type="KEGG" id="lwe:lwe2574"/>
<dbReference type="eggNOG" id="COG0255">
    <property type="taxonomic scope" value="Bacteria"/>
</dbReference>
<dbReference type="HOGENOM" id="CLU_158491_5_2_9"/>
<dbReference type="OrthoDB" id="9815192at2"/>
<dbReference type="Proteomes" id="UP000000779">
    <property type="component" value="Chromosome"/>
</dbReference>
<dbReference type="GO" id="GO:0022625">
    <property type="term" value="C:cytosolic large ribosomal subunit"/>
    <property type="evidence" value="ECO:0007669"/>
    <property type="project" value="TreeGrafter"/>
</dbReference>
<dbReference type="GO" id="GO:0003735">
    <property type="term" value="F:structural constituent of ribosome"/>
    <property type="evidence" value="ECO:0007669"/>
    <property type="project" value="InterPro"/>
</dbReference>
<dbReference type="GO" id="GO:0006412">
    <property type="term" value="P:translation"/>
    <property type="evidence" value="ECO:0007669"/>
    <property type="project" value="UniProtKB-UniRule"/>
</dbReference>
<dbReference type="CDD" id="cd00427">
    <property type="entry name" value="Ribosomal_L29_HIP"/>
    <property type="match status" value="1"/>
</dbReference>
<dbReference type="FunFam" id="1.10.287.310:FF:000001">
    <property type="entry name" value="50S ribosomal protein L29"/>
    <property type="match status" value="1"/>
</dbReference>
<dbReference type="Gene3D" id="1.10.287.310">
    <property type="match status" value="1"/>
</dbReference>
<dbReference type="HAMAP" id="MF_00374">
    <property type="entry name" value="Ribosomal_uL29"/>
    <property type="match status" value="1"/>
</dbReference>
<dbReference type="InterPro" id="IPR050063">
    <property type="entry name" value="Ribosomal_protein_uL29"/>
</dbReference>
<dbReference type="InterPro" id="IPR001854">
    <property type="entry name" value="Ribosomal_uL29"/>
</dbReference>
<dbReference type="InterPro" id="IPR018254">
    <property type="entry name" value="Ribosomal_uL29_CS"/>
</dbReference>
<dbReference type="InterPro" id="IPR036049">
    <property type="entry name" value="Ribosomal_uL29_sf"/>
</dbReference>
<dbReference type="NCBIfam" id="TIGR00012">
    <property type="entry name" value="L29"/>
    <property type="match status" value="1"/>
</dbReference>
<dbReference type="PANTHER" id="PTHR10916">
    <property type="entry name" value="60S RIBOSOMAL PROTEIN L35/50S RIBOSOMAL PROTEIN L29"/>
    <property type="match status" value="1"/>
</dbReference>
<dbReference type="PANTHER" id="PTHR10916:SF0">
    <property type="entry name" value="LARGE RIBOSOMAL SUBUNIT PROTEIN UL29C"/>
    <property type="match status" value="1"/>
</dbReference>
<dbReference type="Pfam" id="PF00831">
    <property type="entry name" value="Ribosomal_L29"/>
    <property type="match status" value="1"/>
</dbReference>
<dbReference type="SUPFAM" id="SSF46561">
    <property type="entry name" value="Ribosomal protein L29 (L29p)"/>
    <property type="match status" value="1"/>
</dbReference>
<dbReference type="PROSITE" id="PS00579">
    <property type="entry name" value="RIBOSOMAL_L29"/>
    <property type="match status" value="1"/>
</dbReference>
<feature type="chain" id="PRO_1000007513" description="Large ribosomal subunit protein uL29">
    <location>
        <begin position="1"/>
        <end position="63"/>
    </location>
</feature>
<gene>
    <name evidence="1" type="primary">rpmC</name>
    <name type="ordered locus">lwe2574</name>
</gene>
<protein>
    <recommendedName>
        <fullName evidence="1">Large ribosomal subunit protein uL29</fullName>
    </recommendedName>
    <alternativeName>
        <fullName evidence="2">50S ribosomal protein L29</fullName>
    </alternativeName>
</protein>
<name>RL29_LISW6</name>
<organism>
    <name type="scientific">Listeria welshimeri serovar 6b (strain ATCC 35897 / DSM 20650 / CCUG 15529 / CIP 8149 / NCTC 11857 / SLCC 5334 / V8)</name>
    <dbReference type="NCBI Taxonomy" id="386043"/>
    <lineage>
        <taxon>Bacteria</taxon>
        <taxon>Bacillati</taxon>
        <taxon>Bacillota</taxon>
        <taxon>Bacilli</taxon>
        <taxon>Bacillales</taxon>
        <taxon>Listeriaceae</taxon>
        <taxon>Listeria</taxon>
    </lineage>
</organism>
<reference key="1">
    <citation type="journal article" date="2006" name="J. Bacteriol.">
        <title>Whole-genome sequence of Listeria welshimeri reveals common steps in genome reduction with Listeria innocua as compared to Listeria monocytogenes.</title>
        <authorList>
            <person name="Hain T."/>
            <person name="Steinweg C."/>
            <person name="Kuenne C.T."/>
            <person name="Billion A."/>
            <person name="Ghai R."/>
            <person name="Chatterjee S.S."/>
            <person name="Domann E."/>
            <person name="Kaerst U."/>
            <person name="Goesmann A."/>
            <person name="Bekel T."/>
            <person name="Bartels D."/>
            <person name="Kaiser O."/>
            <person name="Meyer F."/>
            <person name="Puehler A."/>
            <person name="Weisshaar B."/>
            <person name="Wehland J."/>
            <person name="Liang C."/>
            <person name="Dandekar T."/>
            <person name="Lampidis R."/>
            <person name="Kreft J."/>
            <person name="Goebel W."/>
            <person name="Chakraborty T."/>
        </authorList>
    </citation>
    <scope>NUCLEOTIDE SEQUENCE [LARGE SCALE GENOMIC DNA]</scope>
    <source>
        <strain>ATCC 35897 / DSM 20650 / CCUG 15529 / CIP 8149 / NCTC 11857 / SLCC 5334 / V8</strain>
    </source>
</reference>
<accession>A0ALW0</accession>